<comment type="function">
    <text evidence="1">DNA-dependent ATPase required for providing the needed energy to achieve the termination of early transcripts. Acts in concert with the RAP94 subunit of the virion RNA polymerase and the capping enzyme/VTF to catalyze release of UUUUUNU-containing nascent RNA from the elongation complex. NPH-I must bind ssDNA in order to exhibit ATPase activity (By similarity).</text>
</comment>
<comment type="catalytic activity">
    <reaction>
        <text>a ribonucleoside 5'-triphosphate + H2O = a ribonucleoside 5'-diphosphate + phosphate + H(+)</text>
        <dbReference type="Rhea" id="RHEA:23680"/>
        <dbReference type="ChEBI" id="CHEBI:15377"/>
        <dbReference type="ChEBI" id="CHEBI:15378"/>
        <dbReference type="ChEBI" id="CHEBI:43474"/>
        <dbReference type="ChEBI" id="CHEBI:57930"/>
        <dbReference type="ChEBI" id="CHEBI:61557"/>
        <dbReference type="EC" id="3.6.1.15"/>
    </reaction>
</comment>
<comment type="subunit">
    <text evidence="1">Monomer. Interacts (via C-terminus) with RAP94 (via N-terminus). Interacts with the cap-specific mRNA (nucleoside-2'-O-)-methyltransferase (By similarity).</text>
</comment>
<comment type="subcellular location">
    <subcellularLocation>
        <location evidence="1">Virion</location>
    </subcellularLocation>
    <text evidence="1">Virion core enzyme.</text>
</comment>
<comment type="similarity">
    <text evidence="4">Belongs to the helicase family. NPH I subfamily.</text>
</comment>
<name>NTP1_MYXVL</name>
<keyword id="KW-0067">ATP-binding</keyword>
<keyword id="KW-0238">DNA-binding</keyword>
<keyword id="KW-0378">Hydrolase</keyword>
<keyword id="KW-0547">Nucleotide-binding</keyword>
<keyword id="KW-1185">Reference proteome</keyword>
<keyword id="KW-0804">Transcription</keyword>
<keyword id="KW-0946">Virion</keyword>
<reference key="1">
    <citation type="journal article" date="1999" name="Virology">
        <title>The complete DNA sequence of myxoma virus.</title>
        <authorList>
            <person name="Cameron C."/>
            <person name="Hota-Mitchell S."/>
            <person name="Chen L."/>
            <person name="Barrett J.W."/>
            <person name="Cao J.-X."/>
            <person name="Macaulay C."/>
            <person name="Willer D.O."/>
            <person name="Evans D.H."/>
            <person name="McFadden G."/>
        </authorList>
    </citation>
    <scope>NUCLEOTIDE SEQUENCE [LARGE SCALE GENOMIC DNA]</scope>
</reference>
<accession>Q9Q8L4</accession>
<sequence length="632" mass="72623">MSVYHAAYIDYALRVTENMTDVMTGSETVTLKSYQHFVSRVFLGLDKMHSLLLFHETGVGKTITTVFILKHLKDVYTNWIIILLVKKALVEDPWTYAITKYAPEILKDCIFITYDDKNFHNKFFTNIKTISSRTRLCIIIDECHNFISKSIIKEDGKQRPTKSVYNYLSKNVALHHHKLICLSATPIVNSVKEFVMLVNLLRPKILSNVSLFENKRLVNESELINKLGAICSYIVTNEFSIFDDVAGSSAFARKTVYFQYVNMTQKQEQVYQKAKLAELKAGISSFRIYRRMAATFTFDAFLDKTDKTPEEVANEQITLYKDFETFIKTKKFSEHALSQFKRGQSLGGTSSADDISFLNELRERSCKFTDVCLRILASPGKCLVFEPFVNQSGINILLLYFSAFNISYIEFSSRTKNTRVQSVAEFNKRENTDGDLIKTCVFSLSGGEGISFFSINDIFILDMTWNEASLRQIIGRAIRLNSHVLTPEHRRYVNVHFIVARLSNGDATVDEDLLDIIRTKSKEFTQLFKVFKHTSIEWIYEHQTDFSPVDNESGWSALISRSIDENPTTKRVPHVVKGQNIWYSHSNRLIAVYKGFKTDDGRLFDSDGNFIQTIQDNPVIKIHNDKLVYVLD</sequence>
<evidence type="ECO:0000250" key="1"/>
<evidence type="ECO:0000255" key="2">
    <source>
        <dbReference type="PROSITE-ProRule" id="PRU00541"/>
    </source>
</evidence>
<evidence type="ECO:0000255" key="3">
    <source>
        <dbReference type="PROSITE-ProRule" id="PRU00542"/>
    </source>
</evidence>
<evidence type="ECO:0000305" key="4"/>
<feature type="chain" id="PRO_0000099095" description="Nucleoside triphosphatase I">
    <location>
        <begin position="1"/>
        <end position="632"/>
    </location>
</feature>
<feature type="domain" description="Helicase ATP-binding" evidence="2">
    <location>
        <begin position="42"/>
        <end position="204"/>
    </location>
</feature>
<feature type="domain" description="Helicase C-terminal" evidence="3">
    <location>
        <begin position="367"/>
        <end position="532"/>
    </location>
</feature>
<feature type="region of interest" description="Binding to the cap-specific mRNA (nucleoside-2'-O-)-methyltransferase" evidence="1">
    <location>
        <begin position="457"/>
        <end position="524"/>
    </location>
</feature>
<feature type="short sequence motif" description="DEXH box">
    <location>
        <begin position="141"/>
        <end position="144"/>
    </location>
</feature>
<feature type="binding site" evidence="2">
    <location>
        <begin position="55"/>
        <end position="62"/>
    </location>
    <ligand>
        <name>ATP</name>
        <dbReference type="ChEBI" id="CHEBI:30616"/>
    </ligand>
</feature>
<protein>
    <recommendedName>
        <fullName>Nucleoside triphosphatase I</fullName>
        <ecNumber>3.6.1.15</ecNumber>
    </recommendedName>
    <alternativeName>
        <fullName>M86L protein</fullName>
    </alternativeName>
    <alternativeName>
        <fullName>NPH-I</fullName>
    </alternativeName>
    <alternativeName>
        <fullName>Nucleoside triphosphate phosphohydrolase I</fullName>
        <shortName>NPH I</shortName>
    </alternativeName>
</protein>
<organism>
    <name type="scientific">Myxoma virus (strain Lausanne)</name>
    <name type="common">MYXV</name>
    <dbReference type="NCBI Taxonomy" id="31530"/>
    <lineage>
        <taxon>Viruses</taxon>
        <taxon>Varidnaviria</taxon>
        <taxon>Bamfordvirae</taxon>
        <taxon>Nucleocytoviricota</taxon>
        <taxon>Pokkesviricetes</taxon>
        <taxon>Chitovirales</taxon>
        <taxon>Poxviridae</taxon>
        <taxon>Chordopoxvirinae</taxon>
        <taxon>Leporipoxvirus</taxon>
        <taxon>Myxoma virus</taxon>
    </lineage>
</organism>
<gene>
    <name type="primary">NPH1</name>
    <name type="ordered locus">m086L</name>
</gene>
<proteinExistence type="inferred from homology"/>
<dbReference type="EC" id="3.6.1.15"/>
<dbReference type="EMBL" id="AF170726">
    <property type="protein sequence ID" value="AAF14974.1"/>
    <property type="molecule type" value="Genomic_DNA"/>
</dbReference>
<dbReference type="RefSeq" id="NP_051800.1">
    <property type="nucleotide sequence ID" value="NC_001132.2"/>
</dbReference>
<dbReference type="SMR" id="Q9Q8L4"/>
<dbReference type="GeneID" id="932112"/>
<dbReference type="KEGG" id="vg:932112"/>
<dbReference type="Proteomes" id="UP000000867">
    <property type="component" value="Segment"/>
</dbReference>
<dbReference type="GO" id="GO:0044423">
    <property type="term" value="C:virion component"/>
    <property type="evidence" value="ECO:0007669"/>
    <property type="project" value="UniProtKB-KW"/>
</dbReference>
<dbReference type="GO" id="GO:0005524">
    <property type="term" value="F:ATP binding"/>
    <property type="evidence" value="ECO:0007669"/>
    <property type="project" value="UniProtKB-KW"/>
</dbReference>
<dbReference type="GO" id="GO:0003677">
    <property type="term" value="F:DNA binding"/>
    <property type="evidence" value="ECO:0007669"/>
    <property type="project" value="UniProtKB-KW"/>
</dbReference>
<dbReference type="GO" id="GO:0017111">
    <property type="term" value="F:ribonucleoside triphosphate phosphatase activity"/>
    <property type="evidence" value="ECO:0007669"/>
    <property type="project" value="UniProtKB-EC"/>
</dbReference>
<dbReference type="GO" id="GO:0006351">
    <property type="term" value="P:DNA-templated transcription"/>
    <property type="evidence" value="ECO:0007669"/>
    <property type="project" value="InterPro"/>
</dbReference>
<dbReference type="Gene3D" id="3.40.50.300">
    <property type="entry name" value="P-loop containing nucleotide triphosphate hydrolases"/>
    <property type="match status" value="2"/>
</dbReference>
<dbReference type="InterPro" id="IPR014001">
    <property type="entry name" value="Helicase_ATP-bd"/>
</dbReference>
<dbReference type="InterPro" id="IPR001650">
    <property type="entry name" value="Helicase_C-like"/>
</dbReference>
<dbReference type="InterPro" id="IPR013676">
    <property type="entry name" value="NPHI_C"/>
</dbReference>
<dbReference type="InterPro" id="IPR027417">
    <property type="entry name" value="P-loop_NTPase"/>
</dbReference>
<dbReference type="InterPro" id="IPR000330">
    <property type="entry name" value="SNF2_N"/>
</dbReference>
<dbReference type="PANTHER" id="PTHR10799">
    <property type="entry name" value="SNF2/RAD54 HELICASE FAMILY"/>
    <property type="match status" value="1"/>
</dbReference>
<dbReference type="Pfam" id="PF00271">
    <property type="entry name" value="Helicase_C"/>
    <property type="match status" value="1"/>
</dbReference>
<dbReference type="Pfam" id="PF08469">
    <property type="entry name" value="NPHI_C"/>
    <property type="match status" value="1"/>
</dbReference>
<dbReference type="Pfam" id="PF00176">
    <property type="entry name" value="SNF2-rel_dom"/>
    <property type="match status" value="1"/>
</dbReference>
<dbReference type="SMART" id="SM00487">
    <property type="entry name" value="DEXDc"/>
    <property type="match status" value="1"/>
</dbReference>
<dbReference type="SMART" id="SM00490">
    <property type="entry name" value="HELICc"/>
    <property type="match status" value="1"/>
</dbReference>
<dbReference type="SUPFAM" id="SSF52540">
    <property type="entry name" value="P-loop containing nucleoside triphosphate hydrolases"/>
    <property type="match status" value="2"/>
</dbReference>
<dbReference type="PROSITE" id="PS51192">
    <property type="entry name" value="HELICASE_ATP_BIND_1"/>
    <property type="match status" value="1"/>
</dbReference>
<dbReference type="PROSITE" id="PS51194">
    <property type="entry name" value="HELICASE_CTER"/>
    <property type="match status" value="1"/>
</dbReference>
<organismHost>
    <name type="scientific">Oryctolagus cuniculus</name>
    <name type="common">Rabbit</name>
    <dbReference type="NCBI Taxonomy" id="9986"/>
</organismHost>